<accession>A7GLZ1</accession>
<proteinExistence type="inferred from homology"/>
<protein>
    <recommendedName>
        <fullName evidence="1">HTH-type transcriptional regulator Hpr</fullName>
    </recommendedName>
    <alternativeName>
        <fullName evidence="1">Protease production regulatory protein Hpr</fullName>
    </alternativeName>
</protein>
<keyword id="KW-0238">DNA-binding</keyword>
<keyword id="KW-0678">Repressor</keyword>
<keyword id="KW-0749">Sporulation</keyword>
<keyword id="KW-0804">Transcription</keyword>
<keyword id="KW-0805">Transcription regulation</keyword>
<dbReference type="EMBL" id="CP000764">
    <property type="protein sequence ID" value="ABS21149.1"/>
    <property type="molecule type" value="Genomic_DNA"/>
</dbReference>
<dbReference type="RefSeq" id="WP_011983903.1">
    <property type="nucleotide sequence ID" value="NC_009674.1"/>
</dbReference>
<dbReference type="SMR" id="A7GLZ1"/>
<dbReference type="STRING" id="315749.Bcer98_0812"/>
<dbReference type="GeneID" id="33896178"/>
<dbReference type="KEGG" id="bcy:Bcer98_0812"/>
<dbReference type="eggNOG" id="COG1846">
    <property type="taxonomic scope" value="Bacteria"/>
</dbReference>
<dbReference type="HOGENOM" id="CLU_115790_0_0_9"/>
<dbReference type="OrthoDB" id="2393954at2"/>
<dbReference type="Proteomes" id="UP000002300">
    <property type="component" value="Chromosome"/>
</dbReference>
<dbReference type="GO" id="GO:0003677">
    <property type="term" value="F:DNA binding"/>
    <property type="evidence" value="ECO:0007669"/>
    <property type="project" value="UniProtKB-UniRule"/>
</dbReference>
<dbReference type="GO" id="GO:0003700">
    <property type="term" value="F:DNA-binding transcription factor activity"/>
    <property type="evidence" value="ECO:0007669"/>
    <property type="project" value="UniProtKB-UniRule"/>
</dbReference>
<dbReference type="GO" id="GO:0045892">
    <property type="term" value="P:negative regulation of DNA-templated transcription"/>
    <property type="evidence" value="ECO:0007669"/>
    <property type="project" value="UniProtKB-UniRule"/>
</dbReference>
<dbReference type="GO" id="GO:0006950">
    <property type="term" value="P:response to stress"/>
    <property type="evidence" value="ECO:0007669"/>
    <property type="project" value="TreeGrafter"/>
</dbReference>
<dbReference type="GO" id="GO:0030435">
    <property type="term" value="P:sporulation resulting in formation of a cellular spore"/>
    <property type="evidence" value="ECO:0007669"/>
    <property type="project" value="UniProtKB-UniRule"/>
</dbReference>
<dbReference type="FunFam" id="1.10.10.10:FF:000194">
    <property type="entry name" value="HTH-type transcriptional regulator Hpr"/>
    <property type="match status" value="1"/>
</dbReference>
<dbReference type="Gene3D" id="1.10.10.10">
    <property type="entry name" value="Winged helix-like DNA-binding domain superfamily/Winged helix DNA-binding domain"/>
    <property type="match status" value="1"/>
</dbReference>
<dbReference type="HAMAP" id="MF_01911">
    <property type="entry name" value="HTH_type_Hpr"/>
    <property type="match status" value="1"/>
</dbReference>
<dbReference type="InterPro" id="IPR000835">
    <property type="entry name" value="HTH_MarR-typ"/>
</dbReference>
<dbReference type="InterPro" id="IPR023488">
    <property type="entry name" value="HTH_tscrpt_reg_Hpr"/>
</dbReference>
<dbReference type="InterPro" id="IPR039422">
    <property type="entry name" value="MarR/SlyA-like"/>
</dbReference>
<dbReference type="InterPro" id="IPR023187">
    <property type="entry name" value="Tscrpt_reg_MarR-type_CS"/>
</dbReference>
<dbReference type="InterPro" id="IPR036388">
    <property type="entry name" value="WH-like_DNA-bd_sf"/>
</dbReference>
<dbReference type="InterPro" id="IPR036390">
    <property type="entry name" value="WH_DNA-bd_sf"/>
</dbReference>
<dbReference type="NCBIfam" id="NF010349">
    <property type="entry name" value="PRK13777.1"/>
    <property type="match status" value="1"/>
</dbReference>
<dbReference type="PANTHER" id="PTHR33164:SF58">
    <property type="entry name" value="DNA-BINDING TRANSCRIPTIONAL REPRESSOR SCOC"/>
    <property type="match status" value="1"/>
</dbReference>
<dbReference type="PANTHER" id="PTHR33164">
    <property type="entry name" value="TRANSCRIPTIONAL REGULATOR, MARR FAMILY"/>
    <property type="match status" value="1"/>
</dbReference>
<dbReference type="Pfam" id="PF01047">
    <property type="entry name" value="MarR"/>
    <property type="match status" value="1"/>
</dbReference>
<dbReference type="SMART" id="SM00347">
    <property type="entry name" value="HTH_MARR"/>
    <property type="match status" value="1"/>
</dbReference>
<dbReference type="SUPFAM" id="SSF46785">
    <property type="entry name" value="Winged helix' DNA-binding domain"/>
    <property type="match status" value="1"/>
</dbReference>
<dbReference type="PROSITE" id="PS01117">
    <property type="entry name" value="HTH_MARR_1"/>
    <property type="match status" value="1"/>
</dbReference>
<dbReference type="PROSITE" id="PS50995">
    <property type="entry name" value="HTH_MARR_2"/>
    <property type="match status" value="1"/>
</dbReference>
<comment type="function">
    <text evidence="1">Negative regulator of protease production and sporulation.</text>
</comment>
<comment type="subunit">
    <text evidence="1">Homodimer.</text>
</comment>
<evidence type="ECO:0000255" key="1">
    <source>
        <dbReference type="HAMAP-Rule" id="MF_01911"/>
    </source>
</evidence>
<sequence length="185" mass="21754">MKSGEKDYSIKEAMIFSQRIAQLSKALWKSVEKDWQQWIKPYDLNINEHHILSIAYHLEGASISEIAKFGVMHVSTAFNFSKKLEERGYLVFSKKEDDKRNTYIEITEKGEELLLKLMEEYNPENNSVFNGALALRNFYGKFPENIELIAILRNIYGQDFIDIFEKSLENIEENFTEQEQKLVKK</sequence>
<name>HPR_BACCN</name>
<organism>
    <name type="scientific">Bacillus cytotoxicus (strain DSM 22905 / CIP 110041 / 391-98 / NVH 391-98)</name>
    <dbReference type="NCBI Taxonomy" id="315749"/>
    <lineage>
        <taxon>Bacteria</taxon>
        <taxon>Bacillati</taxon>
        <taxon>Bacillota</taxon>
        <taxon>Bacilli</taxon>
        <taxon>Bacillales</taxon>
        <taxon>Bacillaceae</taxon>
        <taxon>Bacillus</taxon>
        <taxon>Bacillus cereus group</taxon>
    </lineage>
</organism>
<reference key="1">
    <citation type="journal article" date="2008" name="Chem. Biol. Interact.">
        <title>Extending the Bacillus cereus group genomics to putative food-borne pathogens of different toxicity.</title>
        <authorList>
            <person name="Lapidus A."/>
            <person name="Goltsman E."/>
            <person name="Auger S."/>
            <person name="Galleron N."/>
            <person name="Segurens B."/>
            <person name="Dossat C."/>
            <person name="Land M.L."/>
            <person name="Broussolle V."/>
            <person name="Brillard J."/>
            <person name="Guinebretiere M.-H."/>
            <person name="Sanchis V."/>
            <person name="Nguen-the C."/>
            <person name="Lereclus D."/>
            <person name="Richardson P."/>
            <person name="Wincker P."/>
            <person name="Weissenbach J."/>
            <person name="Ehrlich S.D."/>
            <person name="Sorokin A."/>
        </authorList>
    </citation>
    <scope>NUCLEOTIDE SEQUENCE [LARGE SCALE GENOMIC DNA]</scope>
    <source>
        <strain>DSM 22905 / CIP 110041 / 391-98 / NVH 391-98</strain>
    </source>
</reference>
<feature type="chain" id="PRO_0000343621" description="HTH-type transcriptional regulator Hpr">
    <location>
        <begin position="1"/>
        <end position="185"/>
    </location>
</feature>
<feature type="domain" description="HTH marR-type" evidence="1">
    <location>
        <begin position="13"/>
        <end position="157"/>
    </location>
</feature>
<feature type="DNA-binding region" description="H-T-H motif" evidence="1">
    <location>
        <begin position="63"/>
        <end position="86"/>
    </location>
</feature>
<gene>
    <name evidence="1" type="primary">hpr</name>
    <name type="ordered locus">Bcer98_0812</name>
</gene>